<evidence type="ECO:0000255" key="1">
    <source>
        <dbReference type="HAMAP-Rule" id="MF_01638"/>
    </source>
</evidence>
<evidence type="ECO:0000269" key="2">
    <source>
    </source>
</evidence>
<evidence type="ECO:0000303" key="3">
    <source>
    </source>
</evidence>
<evidence type="ECO:0000305" key="4"/>
<accession>P40192</accession>
<protein>
    <recommendedName>
        <fullName evidence="1">Pyridoxine/pyridoxal/pyridoxamine kinase</fullName>
        <shortName evidence="1">PN/PL/PM kinase</shortName>
        <ecNumber evidence="1">2.7.1.35</ecNumber>
    </recommendedName>
    <alternativeName>
        <fullName evidence="1">B6-vitamer kinase</fullName>
    </alternativeName>
</protein>
<dbReference type="EC" id="2.7.1.35" evidence="1"/>
<dbReference type="EMBL" id="U11243">
    <property type="protein sequence ID" value="AAC43343.1"/>
    <property type="molecule type" value="Genomic_DNA"/>
</dbReference>
<dbReference type="EMBL" id="AE006468">
    <property type="protein sequence ID" value="AAL21329.1"/>
    <property type="molecule type" value="Genomic_DNA"/>
</dbReference>
<dbReference type="RefSeq" id="NP_461370.1">
    <property type="nucleotide sequence ID" value="NC_003197.2"/>
</dbReference>
<dbReference type="RefSeq" id="WP_000529613.1">
    <property type="nucleotide sequence ID" value="NC_003197.2"/>
</dbReference>
<dbReference type="SMR" id="P40192"/>
<dbReference type="STRING" id="99287.STM2435"/>
<dbReference type="PaxDb" id="99287-STM2435"/>
<dbReference type="GeneID" id="1253957"/>
<dbReference type="KEGG" id="stm:STM2435"/>
<dbReference type="PATRIC" id="fig|99287.12.peg.2573"/>
<dbReference type="HOGENOM" id="CLU_046496_3_1_6"/>
<dbReference type="OMA" id="AWTHQHP"/>
<dbReference type="PhylomeDB" id="P40192"/>
<dbReference type="BioCyc" id="SENT99287:STM2435-MONOMER"/>
<dbReference type="UniPathway" id="UPA01068">
    <property type="reaction ID" value="UER00298"/>
</dbReference>
<dbReference type="UniPathway" id="UPA01068">
    <property type="reaction ID" value="UER00299"/>
</dbReference>
<dbReference type="UniPathway" id="UPA01068">
    <property type="reaction ID" value="UER00300"/>
</dbReference>
<dbReference type="Proteomes" id="UP000001014">
    <property type="component" value="Chromosome"/>
</dbReference>
<dbReference type="GO" id="GO:0005829">
    <property type="term" value="C:cytosol"/>
    <property type="evidence" value="ECO:0000318"/>
    <property type="project" value="GO_Central"/>
</dbReference>
<dbReference type="GO" id="GO:0005524">
    <property type="term" value="F:ATP binding"/>
    <property type="evidence" value="ECO:0007669"/>
    <property type="project" value="UniProtKB-UniRule"/>
</dbReference>
<dbReference type="GO" id="GO:0008902">
    <property type="term" value="F:hydroxymethylpyrimidine kinase activity"/>
    <property type="evidence" value="ECO:0000318"/>
    <property type="project" value="GO_Central"/>
</dbReference>
<dbReference type="GO" id="GO:0000287">
    <property type="term" value="F:magnesium ion binding"/>
    <property type="evidence" value="ECO:0007669"/>
    <property type="project" value="UniProtKB-UniRule"/>
</dbReference>
<dbReference type="GO" id="GO:0008478">
    <property type="term" value="F:pyridoxal kinase activity"/>
    <property type="evidence" value="ECO:0000318"/>
    <property type="project" value="GO_Central"/>
</dbReference>
<dbReference type="GO" id="GO:0008270">
    <property type="term" value="F:zinc ion binding"/>
    <property type="evidence" value="ECO:0007669"/>
    <property type="project" value="UniProtKB-UniRule"/>
</dbReference>
<dbReference type="GO" id="GO:0009443">
    <property type="term" value="P:pyridoxal 5'-phosphate salvage"/>
    <property type="evidence" value="ECO:0000318"/>
    <property type="project" value="GO_Central"/>
</dbReference>
<dbReference type="CDD" id="cd01173">
    <property type="entry name" value="pyridoxal_pyridoxamine_kinase"/>
    <property type="match status" value="1"/>
</dbReference>
<dbReference type="FunFam" id="3.40.1190.20:FF:000009">
    <property type="entry name" value="Pyridoxine/pyridoxal/pyridoxamine kinase"/>
    <property type="match status" value="1"/>
</dbReference>
<dbReference type="Gene3D" id="3.40.1190.20">
    <property type="match status" value="1"/>
</dbReference>
<dbReference type="HAMAP" id="MF_01638">
    <property type="entry name" value="PdxK"/>
    <property type="match status" value="1"/>
</dbReference>
<dbReference type="InterPro" id="IPR023479">
    <property type="entry name" value="PdxK"/>
</dbReference>
<dbReference type="InterPro" id="IPR013749">
    <property type="entry name" value="PM/HMP-P_kinase-1"/>
</dbReference>
<dbReference type="InterPro" id="IPR004625">
    <property type="entry name" value="PyrdxlKinase"/>
</dbReference>
<dbReference type="InterPro" id="IPR029056">
    <property type="entry name" value="Ribokinase-like"/>
</dbReference>
<dbReference type="NCBIfam" id="NF006034">
    <property type="entry name" value="PRK08176.1"/>
    <property type="match status" value="1"/>
</dbReference>
<dbReference type="NCBIfam" id="TIGR00687">
    <property type="entry name" value="pyridox_kin"/>
    <property type="match status" value="1"/>
</dbReference>
<dbReference type="PANTHER" id="PTHR10534">
    <property type="entry name" value="PYRIDOXAL KINASE"/>
    <property type="match status" value="1"/>
</dbReference>
<dbReference type="PANTHER" id="PTHR10534:SF15">
    <property type="entry name" value="PYRIDOXINE_PYRIDOXAL_PYRIDOXAMINE KINASE"/>
    <property type="match status" value="1"/>
</dbReference>
<dbReference type="Pfam" id="PF08543">
    <property type="entry name" value="Phos_pyr_kin"/>
    <property type="match status" value="1"/>
</dbReference>
<dbReference type="SUPFAM" id="SSF53613">
    <property type="entry name" value="Ribokinase-like"/>
    <property type="match status" value="1"/>
</dbReference>
<proteinExistence type="evidence at transcript level"/>
<comment type="function">
    <text evidence="1">B6-vitamer kinase involved in the salvage pathway of pyridoxal 5'-phosphate (PLP). Catalyzes the phosphorylation of pyridoxine (PN), pyridoxal (PL), and pyridoxamine (PM), forming their respective 5'-phosphorylated esters, i.e. PNP, PLP and PMP.</text>
</comment>
<comment type="catalytic activity">
    <reaction evidence="1">
        <text>pyridoxal + ATP = pyridoxal 5'-phosphate + ADP + H(+)</text>
        <dbReference type="Rhea" id="RHEA:10224"/>
        <dbReference type="ChEBI" id="CHEBI:15378"/>
        <dbReference type="ChEBI" id="CHEBI:17310"/>
        <dbReference type="ChEBI" id="CHEBI:30616"/>
        <dbReference type="ChEBI" id="CHEBI:456216"/>
        <dbReference type="ChEBI" id="CHEBI:597326"/>
        <dbReference type="EC" id="2.7.1.35"/>
    </reaction>
</comment>
<comment type="catalytic activity">
    <reaction evidence="1">
        <text>pyridoxine + ATP = pyridoxine 5'-phosphate + ADP + H(+)</text>
        <dbReference type="Rhea" id="RHEA:25108"/>
        <dbReference type="ChEBI" id="CHEBI:15378"/>
        <dbReference type="ChEBI" id="CHEBI:16709"/>
        <dbReference type="ChEBI" id="CHEBI:30616"/>
        <dbReference type="ChEBI" id="CHEBI:58589"/>
        <dbReference type="ChEBI" id="CHEBI:456216"/>
        <dbReference type="EC" id="2.7.1.35"/>
    </reaction>
</comment>
<comment type="catalytic activity">
    <reaction evidence="1">
        <text>pyridoxamine + ATP = pyridoxamine 5'-phosphate + ADP + H(+)</text>
        <dbReference type="Rhea" id="RHEA:25104"/>
        <dbReference type="ChEBI" id="CHEBI:15378"/>
        <dbReference type="ChEBI" id="CHEBI:30616"/>
        <dbReference type="ChEBI" id="CHEBI:57761"/>
        <dbReference type="ChEBI" id="CHEBI:58451"/>
        <dbReference type="ChEBI" id="CHEBI:456216"/>
        <dbReference type="EC" id="2.7.1.35"/>
    </reaction>
</comment>
<comment type="cofactor">
    <cofactor evidence="1">
        <name>Mg(2+)</name>
        <dbReference type="ChEBI" id="CHEBI:18420"/>
    </cofactor>
</comment>
<comment type="pathway">
    <text evidence="1">Cofactor metabolism; pyridoxal 5'-phosphate salvage; pyridoxal 5'-phosphate from pyridoxal: step 1/1.</text>
</comment>
<comment type="pathway">
    <text evidence="1">Cofactor metabolism; pyridoxal 5'-phosphate salvage; pyridoxine 5'-phosphate from pyridoxine: step 1/1.</text>
</comment>
<comment type="pathway">
    <text evidence="1">Cofactor metabolism; pyridoxal 5'-phosphate salvage; pyridoxamine 5'-phosphate from pyridoxamine: step 1/1.</text>
</comment>
<comment type="subunit">
    <text evidence="1">Homodimer.</text>
</comment>
<comment type="induction">
    <text evidence="2">Is repressed by the transcriptional regulator PtsJ.</text>
</comment>
<comment type="similarity">
    <text evidence="1">Belongs to the pyridoxine kinase family. PdxK subfamily.</text>
</comment>
<reference key="1">
    <citation type="journal article" date="1995" name="DNA Seq.">
        <title>Nucleotide sequence of the region between crr and cysM in Salmonella typhimurium: five novel ORFs including one encoding a putative transcriptional regulator of the phosphotransferase system.</title>
        <authorList>
            <person name="Titgemeyer F.M."/>
            <person name="Reizer J."/>
            <person name="Reizer A."/>
            <person name="Tang J."/>
            <person name="Parr T.R. Jr."/>
            <person name="Saier M.H. Jr."/>
        </authorList>
    </citation>
    <scope>NUCLEOTIDE SEQUENCE [GENOMIC DNA]</scope>
    <source>
        <strain>LT2</strain>
    </source>
</reference>
<reference key="2">
    <citation type="journal article" date="2001" name="Nature">
        <title>Complete genome sequence of Salmonella enterica serovar Typhimurium LT2.</title>
        <authorList>
            <person name="McClelland M."/>
            <person name="Sanderson K.E."/>
            <person name="Spieth J."/>
            <person name="Clifton S.W."/>
            <person name="Latreille P."/>
            <person name="Courtney L."/>
            <person name="Porwollik S."/>
            <person name="Ali J."/>
            <person name="Dante M."/>
            <person name="Du F."/>
            <person name="Hou S."/>
            <person name="Layman D."/>
            <person name="Leonard S."/>
            <person name="Nguyen C."/>
            <person name="Scott K."/>
            <person name="Holmes A."/>
            <person name="Grewal N."/>
            <person name="Mulvaney E."/>
            <person name="Ryan E."/>
            <person name="Sun H."/>
            <person name="Florea L."/>
            <person name="Miller W."/>
            <person name="Stoneking T."/>
            <person name="Nhan M."/>
            <person name="Waterston R."/>
            <person name="Wilson R.K."/>
        </authorList>
    </citation>
    <scope>NUCLEOTIDE SEQUENCE [LARGE SCALE GENOMIC DNA]</scope>
    <source>
        <strain>LT2 / SGSC1412 / ATCC 700720</strain>
    </source>
</reference>
<reference key="3">
    <citation type="journal article" date="2017" name="FEBS J.">
        <title>Salmonella typhimurium PtsJ is a novel MocR-like transcriptional repressor involved in regulating the vitamin B6 salvage pathway.</title>
        <authorList>
            <person name="Tramonti A."/>
            <person name="Milano T."/>
            <person name="Nardella C."/>
            <person name="di Salvo M.L."/>
            <person name="Pascarella S."/>
            <person name="Contestabile R."/>
        </authorList>
    </citation>
    <scope>INDUCTION</scope>
    <source>
        <strain>LT2</strain>
    </source>
</reference>
<gene>
    <name evidence="1 3" type="primary">pdxK</name>
    <name type="ordered locus">STM2435</name>
</gene>
<keyword id="KW-0067">ATP-binding</keyword>
<keyword id="KW-0418">Kinase</keyword>
<keyword id="KW-0460">Magnesium</keyword>
<keyword id="KW-0479">Metal-binding</keyword>
<keyword id="KW-0547">Nucleotide-binding</keyword>
<keyword id="KW-1185">Reference proteome</keyword>
<keyword id="KW-0808">Transferase</keyword>
<keyword id="KW-0862">Zinc</keyword>
<organism>
    <name type="scientific">Salmonella typhimurium (strain LT2 / SGSC1412 / ATCC 700720)</name>
    <dbReference type="NCBI Taxonomy" id="99287"/>
    <lineage>
        <taxon>Bacteria</taxon>
        <taxon>Pseudomonadati</taxon>
        <taxon>Pseudomonadota</taxon>
        <taxon>Gammaproteobacteria</taxon>
        <taxon>Enterobacterales</taxon>
        <taxon>Enterobacteriaceae</taxon>
        <taxon>Salmonella</taxon>
    </lineage>
</organism>
<sequence>MGQESDIQSVLFDDNHRALQTDIVAVQSQVVYGSVGNSIAVPAIKAQGLRVTAVPTVLFSNTPHYKTFYGGIIPAEWFAGYLTALNERDALRELKAITTGYMGSADQIVLLSKWLMAIRASHPEVCILVDPVIGDTDSGMYVQAEIPQAYRTHLLPQAQGLTPNVFELEMLSGKPCRTLEEAVAAAQSLLSDTLKWVVITSAPGESLETITVAVVTAQVVEVFAHPRVATELKGTGDLFCAELVSGIVQGKKLTTAAKDAAQRVLEVMTWTQQCGCDELILPPAGEAR</sequence>
<feature type="chain" id="PRO_0000213344" description="Pyridoxine/pyridoxal/pyridoxamine kinase">
    <location>
        <begin position="1"/>
        <end position="288"/>
    </location>
</feature>
<feature type="binding site" evidence="1">
    <location>
        <position position="28"/>
    </location>
    <ligand>
        <name>substrate</name>
    </ligand>
</feature>
<feature type="binding site" evidence="1">
    <location>
        <position position="64"/>
    </location>
    <ligand>
        <name>substrate</name>
    </ligand>
</feature>
<feature type="binding site" evidence="1">
    <location>
        <position position="130"/>
    </location>
    <ligand>
        <name>ATP</name>
        <dbReference type="ChEBI" id="CHEBI:30616"/>
    </ligand>
</feature>
<feature type="binding site" evidence="1">
    <location>
        <position position="141"/>
    </location>
    <ligand>
        <name>Mg(2+)</name>
        <dbReference type="ChEBI" id="CHEBI:18420"/>
    </ligand>
</feature>
<feature type="binding site" evidence="1">
    <location>
        <position position="162"/>
    </location>
    <ligand>
        <name>ATP</name>
        <dbReference type="ChEBI" id="CHEBI:30616"/>
    </ligand>
</feature>
<feature type="binding site" evidence="1">
    <location>
        <position position="167"/>
    </location>
    <ligand>
        <name>ATP</name>
        <dbReference type="ChEBI" id="CHEBI:30616"/>
    </ligand>
</feature>
<feature type="binding site" evidence="1">
    <location>
        <position position="167"/>
    </location>
    <ligand>
        <name>Mg(2+)</name>
        <dbReference type="ChEBI" id="CHEBI:18420"/>
    </ligand>
</feature>
<feature type="binding site" evidence="1">
    <location>
        <position position="200"/>
    </location>
    <ligand>
        <name>ATP</name>
        <dbReference type="ChEBI" id="CHEBI:30616"/>
    </ligand>
</feature>
<feature type="binding site" evidence="1">
    <location>
        <begin position="225"/>
        <end position="228"/>
    </location>
    <ligand>
        <name>ATP</name>
        <dbReference type="ChEBI" id="CHEBI:30616"/>
    </ligand>
</feature>
<feature type="binding site" evidence="1">
    <location>
        <position position="235"/>
    </location>
    <ligand>
        <name>ATP</name>
        <dbReference type="ChEBI" id="CHEBI:30616"/>
    </ligand>
</feature>
<feature type="binding site" evidence="1">
    <location>
        <position position="237"/>
    </location>
    <ligand>
        <name>substrate</name>
    </ligand>
</feature>
<feature type="sequence conflict" description="In Ref. 1; AAC43343." evidence="4" ref="1">
    <original>A</original>
    <variation>P</variation>
    <location>
        <position position="241"/>
    </location>
</feature>
<feature type="sequence conflict" description="In Ref. 1; AAC43343." evidence="4" ref="1">
    <location>
        <position position="283"/>
    </location>
</feature>
<name>PDXK_SALTY</name>